<sequence length="194" mass="21299">MTGLEIWLLAIGLAMDCLAVSIASGIILRRIQWRPMLIMAFFFGLFQAIMPLLGWLGASTFSHLIESVDHWIAFAILAFLGGRMIKESFKEEDCCQRFNPASLKVVITMAVATSIDALAVGVSFAFLGIKSCSSILYPAGIIGFVSFFMSLIGLIFGIRFGCGIARKLRAELWGGIILILIGTKILIEHLFFNN</sequence>
<evidence type="ECO:0000255" key="1">
    <source>
        <dbReference type="HAMAP-Rule" id="MF_01521"/>
    </source>
</evidence>
<protein>
    <recommendedName>
        <fullName evidence="1">Putative manganese efflux pump MntP</fullName>
    </recommendedName>
</protein>
<accession>Q64X43</accession>
<reference key="1">
    <citation type="journal article" date="2004" name="Proc. Natl. Acad. Sci. U.S.A.">
        <title>Genomic analysis of Bacteroides fragilis reveals extensive DNA inversions regulating cell surface adaptation.</title>
        <authorList>
            <person name="Kuwahara T."/>
            <person name="Yamashita A."/>
            <person name="Hirakawa H."/>
            <person name="Nakayama H."/>
            <person name="Toh H."/>
            <person name="Okada N."/>
            <person name="Kuhara S."/>
            <person name="Hattori M."/>
            <person name="Hayashi T."/>
            <person name="Ohnishi Y."/>
        </authorList>
    </citation>
    <scope>NUCLEOTIDE SEQUENCE [LARGE SCALE GENOMIC DNA]</scope>
    <source>
        <strain>YCH46</strain>
    </source>
</reference>
<gene>
    <name evidence="1" type="primary">mntP</name>
    <name type="ordered locus">BF1183</name>
</gene>
<organism>
    <name type="scientific">Bacteroides fragilis (strain YCH46)</name>
    <dbReference type="NCBI Taxonomy" id="295405"/>
    <lineage>
        <taxon>Bacteria</taxon>
        <taxon>Pseudomonadati</taxon>
        <taxon>Bacteroidota</taxon>
        <taxon>Bacteroidia</taxon>
        <taxon>Bacteroidales</taxon>
        <taxon>Bacteroidaceae</taxon>
        <taxon>Bacteroides</taxon>
    </lineage>
</organism>
<dbReference type="EMBL" id="AP006841">
    <property type="protein sequence ID" value="BAD47933.1"/>
    <property type="molecule type" value="Genomic_DNA"/>
</dbReference>
<dbReference type="RefSeq" id="WP_005785730.1">
    <property type="nucleotide sequence ID" value="NZ_UYXF01000021.1"/>
</dbReference>
<dbReference type="RefSeq" id="YP_098467.1">
    <property type="nucleotide sequence ID" value="NC_006347.1"/>
</dbReference>
<dbReference type="STRING" id="295405.BF1183"/>
<dbReference type="KEGG" id="bfr:BF1183"/>
<dbReference type="PATRIC" id="fig|295405.11.peg.1169"/>
<dbReference type="HOGENOM" id="CLU_096410_3_0_10"/>
<dbReference type="OrthoDB" id="9811590at2"/>
<dbReference type="Proteomes" id="UP000002197">
    <property type="component" value="Chromosome"/>
</dbReference>
<dbReference type="GO" id="GO:0005886">
    <property type="term" value="C:plasma membrane"/>
    <property type="evidence" value="ECO:0007669"/>
    <property type="project" value="UniProtKB-SubCell"/>
</dbReference>
<dbReference type="GO" id="GO:0005384">
    <property type="term" value="F:manganese ion transmembrane transporter activity"/>
    <property type="evidence" value="ECO:0007669"/>
    <property type="project" value="UniProtKB-UniRule"/>
</dbReference>
<dbReference type="HAMAP" id="MF_01521">
    <property type="entry name" value="MntP_pump"/>
    <property type="match status" value="1"/>
</dbReference>
<dbReference type="InterPro" id="IPR003810">
    <property type="entry name" value="Mntp/YtaF"/>
</dbReference>
<dbReference type="InterPro" id="IPR022929">
    <property type="entry name" value="Put_MntP"/>
</dbReference>
<dbReference type="PANTHER" id="PTHR35529">
    <property type="entry name" value="MANGANESE EFFLUX PUMP MNTP-RELATED"/>
    <property type="match status" value="1"/>
</dbReference>
<dbReference type="PANTHER" id="PTHR35529:SF1">
    <property type="entry name" value="MANGANESE EFFLUX PUMP MNTP-RELATED"/>
    <property type="match status" value="1"/>
</dbReference>
<dbReference type="Pfam" id="PF02659">
    <property type="entry name" value="Mntp"/>
    <property type="match status" value="1"/>
</dbReference>
<keyword id="KW-0997">Cell inner membrane</keyword>
<keyword id="KW-1003">Cell membrane</keyword>
<keyword id="KW-0406">Ion transport</keyword>
<keyword id="KW-0464">Manganese</keyword>
<keyword id="KW-0472">Membrane</keyword>
<keyword id="KW-0812">Transmembrane</keyword>
<keyword id="KW-1133">Transmembrane helix</keyword>
<keyword id="KW-0813">Transport</keyword>
<proteinExistence type="inferred from homology"/>
<feature type="chain" id="PRO_0000155632" description="Putative manganese efflux pump MntP">
    <location>
        <begin position="1"/>
        <end position="194"/>
    </location>
</feature>
<feature type="transmembrane region" description="Helical" evidence="1">
    <location>
        <begin position="8"/>
        <end position="28"/>
    </location>
</feature>
<feature type="transmembrane region" description="Helical" evidence="1">
    <location>
        <begin position="36"/>
        <end position="56"/>
    </location>
</feature>
<feature type="transmembrane region" description="Helical" evidence="1">
    <location>
        <begin position="61"/>
        <end position="81"/>
    </location>
</feature>
<feature type="transmembrane region" description="Helical" evidence="1">
    <location>
        <begin position="109"/>
        <end position="129"/>
    </location>
</feature>
<feature type="transmembrane region" description="Helical" evidence="1">
    <location>
        <begin position="138"/>
        <end position="158"/>
    </location>
</feature>
<feature type="transmembrane region" description="Helical" evidence="1">
    <location>
        <begin position="172"/>
        <end position="192"/>
    </location>
</feature>
<comment type="function">
    <text evidence="1">Probably functions as a manganese efflux pump.</text>
</comment>
<comment type="subcellular location">
    <subcellularLocation>
        <location evidence="1">Cell inner membrane</location>
        <topology evidence="1">Multi-pass membrane protein</topology>
    </subcellularLocation>
</comment>
<comment type="similarity">
    <text evidence="1">Belongs to the MntP (TC 9.B.29) family.</text>
</comment>
<name>MNTP_BACFR</name>